<sequence length="468" mass="52915">MFDESKFDVNLKLWALRIPRELCKSASRILNGYMLNMPRIKPITEDPTCEKTRLVILSESVKNADLSEIPEEKLNQLKKLSELEVVPHSVTLGYSYWSADHLLKQILPDGLDIPSSFETIGHIAHLNLHDELLPFKDVIAKVIYDKNYPRIKTIVNKVGTISNEFRVPKFEVLAGENGMETEVKQYGARFKLDYGLVYWNSRLEHEHMRLSSLFKPGETVCDMFAGIGPFAIPAAQKGCFVYANDLNPDSVRYLKINAKFNKVDDLICVHNMDARKFFSHLMAVSTCEDNLQSVADNDKTKEAAVSRGGETNSSGEEIRESNASINEPLGANKKPSGTTKTENGVGKDCKSIEGHANKRLRQTLLPIAKPWEHIDHVIMNLPASALQFLDSFSNVIQKKYWKGPLPLIHCYCFIRASETTEFIIAEAETALKFHIEDPVFHKVRDVAPNKAMFCLSFRLPEACLKQEE</sequence>
<gene>
    <name type="ordered locus">At3g56120</name>
    <name type="ORF">F18O21_80</name>
</gene>
<protein>
    <recommendedName>
        <fullName evidence="1">tRNA (guanine(37)-N(1))-methyltransferase 1</fullName>
        <ecNumber evidence="1">2.1.1.228</ecNumber>
    </recommendedName>
    <alternativeName>
        <fullName evidence="1">M1G-methyltransferase 1</fullName>
    </alternativeName>
    <alternativeName>
        <fullName evidence="1">tRNA [GM37] methyltransferase 1</fullName>
    </alternativeName>
    <alternativeName>
        <fullName evidence="1">tRNA methyltransferase 5 homolog 1</fullName>
    </alternativeName>
</protein>
<proteinExistence type="evidence at transcript level"/>
<name>TRM51_ARATH</name>
<comment type="function">
    <text evidence="1">Specifically methylates the N1 position of guanosine-37 in various cytoplasmic and mitochondrial tRNAs. Methylation is not dependent on the nature of the nucleoside 5' of the target nucleoside. This is the first step in the biosynthesis of wybutosine (yW), a modified base adjacent to the anticodon of tRNAs and required for accurate decoding.</text>
</comment>
<comment type="catalytic activity">
    <reaction evidence="1">
        <text>guanosine(37) in tRNA + S-adenosyl-L-methionine = N(1)-methylguanosine(37) in tRNA + S-adenosyl-L-homocysteine + H(+)</text>
        <dbReference type="Rhea" id="RHEA:36899"/>
        <dbReference type="Rhea" id="RHEA-COMP:10145"/>
        <dbReference type="Rhea" id="RHEA-COMP:10147"/>
        <dbReference type="ChEBI" id="CHEBI:15378"/>
        <dbReference type="ChEBI" id="CHEBI:57856"/>
        <dbReference type="ChEBI" id="CHEBI:59789"/>
        <dbReference type="ChEBI" id="CHEBI:73542"/>
        <dbReference type="ChEBI" id="CHEBI:74269"/>
        <dbReference type="EC" id="2.1.1.228"/>
    </reaction>
</comment>
<comment type="subunit">
    <text evidence="1">Monomer.</text>
</comment>
<comment type="subcellular location">
    <subcellularLocation>
        <location evidence="1">Mitochondrion matrix</location>
    </subcellularLocation>
    <subcellularLocation>
        <location evidence="1">Nucleus</location>
    </subcellularLocation>
    <subcellularLocation>
        <location evidence="1">Cytoplasm</location>
    </subcellularLocation>
    <text evidence="1">Predominantly in the mitochondria and in the nucleus.</text>
</comment>
<comment type="similarity">
    <text evidence="3">Belongs to the class I-like SAM-binding methyltransferase superfamily. TRM5/TYW2 family.</text>
</comment>
<comment type="sequence caution" evidence="3">
    <conflict type="erroneous gene model prediction">
        <sequence resource="EMBL-CDS" id="CAB87411"/>
    </conflict>
</comment>
<keyword id="KW-0963">Cytoplasm</keyword>
<keyword id="KW-0489">Methyltransferase</keyword>
<keyword id="KW-0496">Mitochondrion</keyword>
<keyword id="KW-0539">Nucleus</keyword>
<keyword id="KW-1185">Reference proteome</keyword>
<keyword id="KW-0949">S-adenosyl-L-methionine</keyword>
<keyword id="KW-0808">Transferase</keyword>
<keyword id="KW-0819">tRNA processing</keyword>
<feature type="chain" id="PRO_0000414136" description="tRNA (guanine(37)-N(1))-methyltransferase 1">
    <location>
        <begin position="1"/>
        <end position="468"/>
    </location>
</feature>
<feature type="region of interest" description="Disordered" evidence="2">
    <location>
        <begin position="301"/>
        <end position="348"/>
    </location>
</feature>
<feature type="compositionally biased region" description="Polar residues" evidence="2">
    <location>
        <begin position="309"/>
        <end position="325"/>
    </location>
</feature>
<feature type="binding site" evidence="1">
    <location>
        <position position="207"/>
    </location>
    <ligand>
        <name>S-adenosyl-L-methionine</name>
        <dbReference type="ChEBI" id="CHEBI:59789"/>
    </ligand>
</feature>
<feature type="binding site" evidence="1">
    <location>
        <begin position="245"/>
        <end position="246"/>
    </location>
    <ligand>
        <name>S-adenosyl-L-methionine</name>
        <dbReference type="ChEBI" id="CHEBI:59789"/>
    </ligand>
</feature>
<feature type="binding site" evidence="1">
    <location>
        <begin position="273"/>
        <end position="274"/>
    </location>
    <ligand>
        <name>S-adenosyl-L-methionine</name>
        <dbReference type="ChEBI" id="CHEBI:59789"/>
    </ligand>
</feature>
<feature type="binding site" evidence="1">
    <location>
        <position position="380"/>
    </location>
    <ligand>
        <name>S-adenosyl-L-methionine</name>
        <dbReference type="ChEBI" id="CHEBI:59789"/>
    </ligand>
</feature>
<organism>
    <name type="scientific">Arabidopsis thaliana</name>
    <name type="common">Mouse-ear cress</name>
    <dbReference type="NCBI Taxonomy" id="3702"/>
    <lineage>
        <taxon>Eukaryota</taxon>
        <taxon>Viridiplantae</taxon>
        <taxon>Streptophyta</taxon>
        <taxon>Embryophyta</taxon>
        <taxon>Tracheophyta</taxon>
        <taxon>Spermatophyta</taxon>
        <taxon>Magnoliopsida</taxon>
        <taxon>eudicotyledons</taxon>
        <taxon>Gunneridae</taxon>
        <taxon>Pentapetalae</taxon>
        <taxon>rosids</taxon>
        <taxon>malvids</taxon>
        <taxon>Brassicales</taxon>
        <taxon>Brassicaceae</taxon>
        <taxon>Camelineae</taxon>
        <taxon>Arabidopsis</taxon>
    </lineage>
</organism>
<evidence type="ECO:0000255" key="1">
    <source>
        <dbReference type="HAMAP-Rule" id="MF_03152"/>
    </source>
</evidence>
<evidence type="ECO:0000256" key="2">
    <source>
        <dbReference type="SAM" id="MobiDB-lite"/>
    </source>
</evidence>
<evidence type="ECO:0000305" key="3"/>
<accession>Q93YU6</accession>
<accession>Q9LYM9</accession>
<dbReference type="EC" id="2.1.1.228" evidence="1"/>
<dbReference type="EMBL" id="AL163763">
    <property type="protein sequence ID" value="CAB87411.1"/>
    <property type="status" value="ALT_SEQ"/>
    <property type="molecule type" value="Genomic_DNA"/>
</dbReference>
<dbReference type="EMBL" id="CP002686">
    <property type="protein sequence ID" value="AEE79480.1"/>
    <property type="molecule type" value="Genomic_DNA"/>
</dbReference>
<dbReference type="EMBL" id="AY059762">
    <property type="protein sequence ID" value="AAL24110.1"/>
    <property type="molecule type" value="mRNA"/>
</dbReference>
<dbReference type="EMBL" id="BT004372">
    <property type="protein sequence ID" value="AAO42366.1"/>
    <property type="molecule type" value="mRNA"/>
</dbReference>
<dbReference type="PIR" id="T47729">
    <property type="entry name" value="T47729"/>
</dbReference>
<dbReference type="RefSeq" id="NP_567034.1">
    <property type="nucleotide sequence ID" value="NM_115470.2"/>
</dbReference>
<dbReference type="SMR" id="Q93YU6"/>
<dbReference type="FunCoup" id="Q93YU6">
    <property type="interactions" value="3718"/>
</dbReference>
<dbReference type="STRING" id="3702.Q93YU6"/>
<dbReference type="PaxDb" id="3702-AT3G56120.1"/>
<dbReference type="ProteomicsDB" id="242798"/>
<dbReference type="EnsemblPlants" id="AT3G56120.1">
    <property type="protein sequence ID" value="AT3G56120.1"/>
    <property type="gene ID" value="AT3G56120"/>
</dbReference>
<dbReference type="GeneID" id="824778"/>
<dbReference type="Gramene" id="AT3G56120.1">
    <property type="protein sequence ID" value="AT3G56120.1"/>
    <property type="gene ID" value="AT3G56120"/>
</dbReference>
<dbReference type="KEGG" id="ath:AT3G56120"/>
<dbReference type="Araport" id="AT3G56120"/>
<dbReference type="TAIR" id="AT3G56120">
    <property type="gene designation" value="TRM5A"/>
</dbReference>
<dbReference type="eggNOG" id="KOG2078">
    <property type="taxonomic scope" value="Eukaryota"/>
</dbReference>
<dbReference type="HOGENOM" id="CLU_022610_2_1_1"/>
<dbReference type="InParanoid" id="Q93YU6"/>
<dbReference type="OMA" id="VGSHSQF"/>
<dbReference type="PhylomeDB" id="Q93YU6"/>
<dbReference type="BRENDA" id="2.1.1.228">
    <property type="organism ID" value="399"/>
</dbReference>
<dbReference type="PRO" id="PR:Q93YU6"/>
<dbReference type="Proteomes" id="UP000006548">
    <property type="component" value="Chromosome 3"/>
</dbReference>
<dbReference type="ExpressionAtlas" id="Q93YU6">
    <property type="expression patterns" value="baseline and differential"/>
</dbReference>
<dbReference type="GO" id="GO:0005759">
    <property type="term" value="C:mitochondrial matrix"/>
    <property type="evidence" value="ECO:0007669"/>
    <property type="project" value="UniProtKB-SubCell"/>
</dbReference>
<dbReference type="GO" id="GO:0005634">
    <property type="term" value="C:nucleus"/>
    <property type="evidence" value="ECO:0000314"/>
    <property type="project" value="TAIR"/>
</dbReference>
<dbReference type="GO" id="GO:0052906">
    <property type="term" value="F:tRNA (guanine(37)-N1)-methyltransferase activity"/>
    <property type="evidence" value="ECO:0000314"/>
    <property type="project" value="TAIR"/>
</dbReference>
<dbReference type="GO" id="GO:0002939">
    <property type="term" value="P:tRNA N1-guanine methylation"/>
    <property type="evidence" value="ECO:0000314"/>
    <property type="project" value="TAIR"/>
</dbReference>
<dbReference type="CDD" id="cd02440">
    <property type="entry name" value="AdoMet_MTases"/>
    <property type="match status" value="1"/>
</dbReference>
<dbReference type="FunFam" id="3.30.300.110:FF:000004">
    <property type="entry name" value="tRNA (guanine(37)-N1)-methyltransferase"/>
    <property type="match status" value="1"/>
</dbReference>
<dbReference type="Gene3D" id="3.30.300.110">
    <property type="entry name" value="Met-10+ protein-like domains"/>
    <property type="match status" value="1"/>
</dbReference>
<dbReference type="Gene3D" id="3.40.50.150">
    <property type="entry name" value="Vaccinia Virus protein VP39"/>
    <property type="match status" value="1"/>
</dbReference>
<dbReference type="HAMAP" id="MF_03152">
    <property type="entry name" value="TRM5"/>
    <property type="match status" value="1"/>
</dbReference>
<dbReference type="InterPro" id="IPR030382">
    <property type="entry name" value="MeTrfase_TRM5/TYW2"/>
</dbReference>
<dbReference type="InterPro" id="IPR029063">
    <property type="entry name" value="SAM-dependent_MTases_sf"/>
</dbReference>
<dbReference type="InterPro" id="IPR056743">
    <property type="entry name" value="TRM5-TYW2-like_MTfase"/>
</dbReference>
<dbReference type="InterPro" id="IPR056744">
    <property type="entry name" value="TRM5/TYW2-like_N"/>
</dbReference>
<dbReference type="InterPro" id="IPR025792">
    <property type="entry name" value="tRNA_Gua_MeTrfase_euk"/>
</dbReference>
<dbReference type="PANTHER" id="PTHR23245:SF36">
    <property type="entry name" value="TRNA (GUANINE(37)-N1)-METHYLTRANSFERASE"/>
    <property type="match status" value="1"/>
</dbReference>
<dbReference type="PANTHER" id="PTHR23245">
    <property type="entry name" value="TRNA METHYLTRANSFERASE"/>
    <property type="match status" value="1"/>
</dbReference>
<dbReference type="Pfam" id="PF02475">
    <property type="entry name" value="TRM5-TYW2_MTfase"/>
    <property type="match status" value="1"/>
</dbReference>
<dbReference type="Pfam" id="PF25133">
    <property type="entry name" value="TYW2_N_2"/>
    <property type="match status" value="1"/>
</dbReference>
<dbReference type="SUPFAM" id="SSF53335">
    <property type="entry name" value="S-adenosyl-L-methionine-dependent methyltransferases"/>
    <property type="match status" value="1"/>
</dbReference>
<dbReference type="PROSITE" id="PS51684">
    <property type="entry name" value="SAM_MT_TRM5_TYW2"/>
    <property type="match status" value="1"/>
</dbReference>
<reference key="1">
    <citation type="journal article" date="2000" name="Nature">
        <title>Sequence and analysis of chromosome 3 of the plant Arabidopsis thaliana.</title>
        <authorList>
            <person name="Salanoubat M."/>
            <person name="Lemcke K."/>
            <person name="Rieger M."/>
            <person name="Ansorge W."/>
            <person name="Unseld M."/>
            <person name="Fartmann B."/>
            <person name="Valle G."/>
            <person name="Bloecker H."/>
            <person name="Perez-Alonso M."/>
            <person name="Obermaier B."/>
            <person name="Delseny M."/>
            <person name="Boutry M."/>
            <person name="Grivell L.A."/>
            <person name="Mache R."/>
            <person name="Puigdomenech P."/>
            <person name="De Simone V."/>
            <person name="Choisne N."/>
            <person name="Artiguenave F."/>
            <person name="Robert C."/>
            <person name="Brottier P."/>
            <person name="Wincker P."/>
            <person name="Cattolico L."/>
            <person name="Weissenbach J."/>
            <person name="Saurin W."/>
            <person name="Quetier F."/>
            <person name="Schaefer M."/>
            <person name="Mueller-Auer S."/>
            <person name="Gabel C."/>
            <person name="Fuchs M."/>
            <person name="Benes V."/>
            <person name="Wurmbach E."/>
            <person name="Drzonek H."/>
            <person name="Erfle H."/>
            <person name="Jordan N."/>
            <person name="Bangert S."/>
            <person name="Wiedelmann R."/>
            <person name="Kranz H."/>
            <person name="Voss H."/>
            <person name="Holland R."/>
            <person name="Brandt P."/>
            <person name="Nyakatura G."/>
            <person name="Vezzi A."/>
            <person name="D'Angelo M."/>
            <person name="Pallavicini A."/>
            <person name="Toppo S."/>
            <person name="Simionati B."/>
            <person name="Conrad A."/>
            <person name="Hornischer K."/>
            <person name="Kauer G."/>
            <person name="Loehnert T.-H."/>
            <person name="Nordsiek G."/>
            <person name="Reichelt J."/>
            <person name="Scharfe M."/>
            <person name="Schoen O."/>
            <person name="Bargues M."/>
            <person name="Terol J."/>
            <person name="Climent J."/>
            <person name="Navarro P."/>
            <person name="Collado C."/>
            <person name="Perez-Perez A."/>
            <person name="Ottenwaelder B."/>
            <person name="Duchemin D."/>
            <person name="Cooke R."/>
            <person name="Laudie M."/>
            <person name="Berger-Llauro C."/>
            <person name="Purnelle B."/>
            <person name="Masuy D."/>
            <person name="de Haan M."/>
            <person name="Maarse A.C."/>
            <person name="Alcaraz J.-P."/>
            <person name="Cottet A."/>
            <person name="Casacuberta E."/>
            <person name="Monfort A."/>
            <person name="Argiriou A."/>
            <person name="Flores M."/>
            <person name="Liguori R."/>
            <person name="Vitale D."/>
            <person name="Mannhaupt G."/>
            <person name="Haase D."/>
            <person name="Schoof H."/>
            <person name="Rudd S."/>
            <person name="Zaccaria P."/>
            <person name="Mewes H.-W."/>
            <person name="Mayer K.F.X."/>
            <person name="Kaul S."/>
            <person name="Town C.D."/>
            <person name="Koo H.L."/>
            <person name="Tallon L.J."/>
            <person name="Jenkins J."/>
            <person name="Rooney T."/>
            <person name="Rizzo M."/>
            <person name="Walts A."/>
            <person name="Utterback T."/>
            <person name="Fujii C.Y."/>
            <person name="Shea T.P."/>
            <person name="Creasy T.H."/>
            <person name="Haas B."/>
            <person name="Maiti R."/>
            <person name="Wu D."/>
            <person name="Peterson J."/>
            <person name="Van Aken S."/>
            <person name="Pai G."/>
            <person name="Militscher J."/>
            <person name="Sellers P."/>
            <person name="Gill J.E."/>
            <person name="Feldblyum T.V."/>
            <person name="Preuss D."/>
            <person name="Lin X."/>
            <person name="Nierman W.C."/>
            <person name="Salzberg S.L."/>
            <person name="White O."/>
            <person name="Venter J.C."/>
            <person name="Fraser C.M."/>
            <person name="Kaneko T."/>
            <person name="Nakamura Y."/>
            <person name="Sato S."/>
            <person name="Kato T."/>
            <person name="Asamizu E."/>
            <person name="Sasamoto S."/>
            <person name="Kimura T."/>
            <person name="Idesawa K."/>
            <person name="Kawashima K."/>
            <person name="Kishida Y."/>
            <person name="Kiyokawa C."/>
            <person name="Kohara M."/>
            <person name="Matsumoto M."/>
            <person name="Matsuno A."/>
            <person name="Muraki A."/>
            <person name="Nakayama S."/>
            <person name="Nakazaki N."/>
            <person name="Shinpo S."/>
            <person name="Takeuchi C."/>
            <person name="Wada T."/>
            <person name="Watanabe A."/>
            <person name="Yamada M."/>
            <person name="Yasuda M."/>
            <person name="Tabata S."/>
        </authorList>
    </citation>
    <scope>NUCLEOTIDE SEQUENCE [LARGE SCALE GENOMIC DNA]</scope>
    <source>
        <strain>cv. Columbia</strain>
    </source>
</reference>
<reference key="2">
    <citation type="journal article" date="2017" name="Plant J.">
        <title>Araport11: a complete reannotation of the Arabidopsis thaliana reference genome.</title>
        <authorList>
            <person name="Cheng C.Y."/>
            <person name="Krishnakumar V."/>
            <person name="Chan A.P."/>
            <person name="Thibaud-Nissen F."/>
            <person name="Schobel S."/>
            <person name="Town C.D."/>
        </authorList>
    </citation>
    <scope>GENOME REANNOTATION</scope>
    <source>
        <strain>cv. Columbia</strain>
    </source>
</reference>
<reference key="3">
    <citation type="journal article" date="2003" name="Science">
        <title>Empirical analysis of transcriptional activity in the Arabidopsis genome.</title>
        <authorList>
            <person name="Yamada K."/>
            <person name="Lim J."/>
            <person name="Dale J.M."/>
            <person name="Chen H."/>
            <person name="Shinn P."/>
            <person name="Palm C.J."/>
            <person name="Southwick A.M."/>
            <person name="Wu H.C."/>
            <person name="Kim C.J."/>
            <person name="Nguyen M."/>
            <person name="Pham P.K."/>
            <person name="Cheuk R.F."/>
            <person name="Karlin-Newmann G."/>
            <person name="Liu S.X."/>
            <person name="Lam B."/>
            <person name="Sakano H."/>
            <person name="Wu T."/>
            <person name="Yu G."/>
            <person name="Miranda M."/>
            <person name="Quach H.L."/>
            <person name="Tripp M."/>
            <person name="Chang C.H."/>
            <person name="Lee J.M."/>
            <person name="Toriumi M.J."/>
            <person name="Chan M.M."/>
            <person name="Tang C.C."/>
            <person name="Onodera C.S."/>
            <person name="Deng J.M."/>
            <person name="Akiyama K."/>
            <person name="Ansari Y."/>
            <person name="Arakawa T."/>
            <person name="Banh J."/>
            <person name="Banno F."/>
            <person name="Bowser L."/>
            <person name="Brooks S.Y."/>
            <person name="Carninci P."/>
            <person name="Chao Q."/>
            <person name="Choy N."/>
            <person name="Enju A."/>
            <person name="Goldsmith A.D."/>
            <person name="Gurjal M."/>
            <person name="Hansen N.F."/>
            <person name="Hayashizaki Y."/>
            <person name="Johnson-Hopson C."/>
            <person name="Hsuan V.W."/>
            <person name="Iida K."/>
            <person name="Karnes M."/>
            <person name="Khan S."/>
            <person name="Koesema E."/>
            <person name="Ishida J."/>
            <person name="Jiang P.X."/>
            <person name="Jones T."/>
            <person name="Kawai J."/>
            <person name="Kamiya A."/>
            <person name="Meyers C."/>
            <person name="Nakajima M."/>
            <person name="Narusaka M."/>
            <person name="Seki M."/>
            <person name="Sakurai T."/>
            <person name="Satou M."/>
            <person name="Tamse R."/>
            <person name="Vaysberg M."/>
            <person name="Wallender E.K."/>
            <person name="Wong C."/>
            <person name="Yamamura Y."/>
            <person name="Yuan S."/>
            <person name="Shinozaki K."/>
            <person name="Davis R.W."/>
            <person name="Theologis A."/>
            <person name="Ecker J.R."/>
        </authorList>
    </citation>
    <scope>NUCLEOTIDE SEQUENCE [LARGE SCALE MRNA]</scope>
    <source>
        <strain>cv. Columbia</strain>
    </source>
</reference>